<sequence length="219" mass="22860">MTQDELKKAVGWAALQYVQPGTIVGVGTGSTAAHFIDALGTMKGQIEGAVSSSDASTEKLKSLGIHVFDLNEVDSLGIYVDGADEINGHMQMIKGGGAALTREKIIASVAEKFICIADASKQVDILGKFPLPVEVIPMARSAVARQLVKLGGRPEYRQGVVTDNGNVILDVHGMEILDPIAMENAINAIPGVVTVGLFANRGADVALIGTPDGVKTIVK</sequence>
<dbReference type="EC" id="5.3.1.6" evidence="1"/>
<dbReference type="EMBL" id="AE005674">
    <property type="protein sequence ID" value="AAN44383.2"/>
    <property type="molecule type" value="Genomic_DNA"/>
</dbReference>
<dbReference type="EMBL" id="AE014073">
    <property type="protein sequence ID" value="AAP18205.1"/>
    <property type="molecule type" value="Genomic_DNA"/>
</dbReference>
<dbReference type="RefSeq" id="NP_708676.2">
    <property type="nucleotide sequence ID" value="NC_004337.2"/>
</dbReference>
<dbReference type="RefSeq" id="WP_000189743.1">
    <property type="nucleotide sequence ID" value="NZ_WPGW01000018.1"/>
</dbReference>
<dbReference type="SMR" id="P0A7Z3"/>
<dbReference type="STRING" id="198214.SF2899"/>
<dbReference type="DrugBank" id="DB04127">
    <property type="generic name" value="beta-D-arabinofuranose 5-phosphate"/>
</dbReference>
<dbReference type="PaxDb" id="198214-SF2899"/>
<dbReference type="GeneID" id="1025914"/>
<dbReference type="GeneID" id="93779085"/>
<dbReference type="KEGG" id="sfl:SF2899"/>
<dbReference type="KEGG" id="sfx:S3099"/>
<dbReference type="PATRIC" id="fig|198214.7.peg.3449"/>
<dbReference type="HOGENOM" id="CLU_056590_1_1_6"/>
<dbReference type="UniPathway" id="UPA00115">
    <property type="reaction ID" value="UER00412"/>
</dbReference>
<dbReference type="Proteomes" id="UP000001006">
    <property type="component" value="Chromosome"/>
</dbReference>
<dbReference type="Proteomes" id="UP000002673">
    <property type="component" value="Chromosome"/>
</dbReference>
<dbReference type="GO" id="GO:0005829">
    <property type="term" value="C:cytosol"/>
    <property type="evidence" value="ECO:0007669"/>
    <property type="project" value="TreeGrafter"/>
</dbReference>
<dbReference type="GO" id="GO:0004751">
    <property type="term" value="F:ribose-5-phosphate isomerase activity"/>
    <property type="evidence" value="ECO:0007669"/>
    <property type="project" value="UniProtKB-UniRule"/>
</dbReference>
<dbReference type="GO" id="GO:0006014">
    <property type="term" value="P:D-ribose metabolic process"/>
    <property type="evidence" value="ECO:0007669"/>
    <property type="project" value="TreeGrafter"/>
</dbReference>
<dbReference type="GO" id="GO:0009052">
    <property type="term" value="P:pentose-phosphate shunt, non-oxidative branch"/>
    <property type="evidence" value="ECO:0007669"/>
    <property type="project" value="UniProtKB-UniRule"/>
</dbReference>
<dbReference type="CDD" id="cd01398">
    <property type="entry name" value="RPI_A"/>
    <property type="match status" value="1"/>
</dbReference>
<dbReference type="FunFam" id="3.30.70.260:FF:000004">
    <property type="entry name" value="Ribose-5-phosphate isomerase A"/>
    <property type="match status" value="1"/>
</dbReference>
<dbReference type="FunFam" id="3.40.50.1360:FF:000001">
    <property type="entry name" value="Ribose-5-phosphate isomerase A"/>
    <property type="match status" value="1"/>
</dbReference>
<dbReference type="Gene3D" id="3.30.70.260">
    <property type="match status" value="1"/>
</dbReference>
<dbReference type="Gene3D" id="3.40.50.1360">
    <property type="match status" value="1"/>
</dbReference>
<dbReference type="HAMAP" id="MF_00170">
    <property type="entry name" value="Rib_5P_isom_A"/>
    <property type="match status" value="1"/>
</dbReference>
<dbReference type="InterPro" id="IPR037171">
    <property type="entry name" value="NagB/RpiA_transferase-like"/>
</dbReference>
<dbReference type="InterPro" id="IPR020672">
    <property type="entry name" value="Ribose5P_isomerase_typA_subgr"/>
</dbReference>
<dbReference type="InterPro" id="IPR004788">
    <property type="entry name" value="Ribose5P_isomerase_type_A"/>
</dbReference>
<dbReference type="NCBIfam" id="NF001924">
    <property type="entry name" value="PRK00702.1"/>
    <property type="match status" value="1"/>
</dbReference>
<dbReference type="NCBIfam" id="TIGR00021">
    <property type="entry name" value="rpiA"/>
    <property type="match status" value="1"/>
</dbReference>
<dbReference type="PANTHER" id="PTHR11934">
    <property type="entry name" value="RIBOSE-5-PHOSPHATE ISOMERASE"/>
    <property type="match status" value="1"/>
</dbReference>
<dbReference type="PANTHER" id="PTHR11934:SF0">
    <property type="entry name" value="RIBOSE-5-PHOSPHATE ISOMERASE"/>
    <property type="match status" value="1"/>
</dbReference>
<dbReference type="Pfam" id="PF06026">
    <property type="entry name" value="Rib_5-P_isom_A"/>
    <property type="match status" value="1"/>
</dbReference>
<dbReference type="SUPFAM" id="SSF75445">
    <property type="entry name" value="D-ribose-5-phosphate isomerase (RpiA), lid domain"/>
    <property type="match status" value="1"/>
</dbReference>
<dbReference type="SUPFAM" id="SSF100950">
    <property type="entry name" value="NagB/RpiA/CoA transferase-like"/>
    <property type="match status" value="1"/>
</dbReference>
<proteinExistence type="inferred from homology"/>
<keyword id="KW-0413">Isomerase</keyword>
<keyword id="KW-1185">Reference proteome</keyword>
<reference key="1">
    <citation type="journal article" date="2002" name="Nucleic Acids Res.">
        <title>Genome sequence of Shigella flexneri 2a: insights into pathogenicity through comparison with genomes of Escherichia coli K12 and O157.</title>
        <authorList>
            <person name="Jin Q."/>
            <person name="Yuan Z."/>
            <person name="Xu J."/>
            <person name="Wang Y."/>
            <person name="Shen Y."/>
            <person name="Lu W."/>
            <person name="Wang J."/>
            <person name="Liu H."/>
            <person name="Yang J."/>
            <person name="Yang F."/>
            <person name="Zhang X."/>
            <person name="Zhang J."/>
            <person name="Yang G."/>
            <person name="Wu H."/>
            <person name="Qu D."/>
            <person name="Dong J."/>
            <person name="Sun L."/>
            <person name="Xue Y."/>
            <person name="Zhao A."/>
            <person name="Gao Y."/>
            <person name="Zhu J."/>
            <person name="Kan B."/>
            <person name="Ding K."/>
            <person name="Chen S."/>
            <person name="Cheng H."/>
            <person name="Yao Z."/>
            <person name="He B."/>
            <person name="Chen R."/>
            <person name="Ma D."/>
            <person name="Qiang B."/>
            <person name="Wen Y."/>
            <person name="Hou Y."/>
            <person name="Yu J."/>
        </authorList>
    </citation>
    <scope>NUCLEOTIDE SEQUENCE [LARGE SCALE GENOMIC DNA]</scope>
    <source>
        <strain>301 / Serotype 2a</strain>
    </source>
</reference>
<reference key="2">
    <citation type="journal article" date="2003" name="Infect. Immun.">
        <title>Complete genome sequence and comparative genomics of Shigella flexneri serotype 2a strain 2457T.</title>
        <authorList>
            <person name="Wei J."/>
            <person name="Goldberg M.B."/>
            <person name="Burland V."/>
            <person name="Venkatesan M.M."/>
            <person name="Deng W."/>
            <person name="Fournier G."/>
            <person name="Mayhew G.F."/>
            <person name="Plunkett G. III"/>
            <person name="Rose D.J."/>
            <person name="Darling A."/>
            <person name="Mau B."/>
            <person name="Perna N.T."/>
            <person name="Payne S.M."/>
            <person name="Runyen-Janecky L.J."/>
            <person name="Zhou S."/>
            <person name="Schwartz D.C."/>
            <person name="Blattner F.R."/>
        </authorList>
    </citation>
    <scope>NUCLEOTIDE SEQUENCE [LARGE SCALE GENOMIC DNA]</scope>
    <source>
        <strain>ATCC 700930 / 2457T / Serotype 2a</strain>
    </source>
</reference>
<name>RPIA_SHIFL</name>
<accession>P0A7Z3</accession>
<accession>P27252</accession>
<gene>
    <name evidence="1" type="primary">rpiA</name>
    <name type="ordered locus">SF2899</name>
    <name type="ordered locus">S3099</name>
</gene>
<protein>
    <recommendedName>
        <fullName evidence="1">Ribose-5-phosphate isomerase A</fullName>
        <ecNumber evidence="1">5.3.1.6</ecNumber>
    </recommendedName>
    <alternativeName>
        <fullName evidence="1">Phosphoriboisomerase A</fullName>
        <shortName evidence="1">PRI</shortName>
    </alternativeName>
</protein>
<comment type="function">
    <text evidence="1">Catalyzes the reversible conversion of ribose-5-phosphate to ribulose 5-phosphate.</text>
</comment>
<comment type="catalytic activity">
    <reaction evidence="1">
        <text>aldehydo-D-ribose 5-phosphate = D-ribulose 5-phosphate</text>
        <dbReference type="Rhea" id="RHEA:14657"/>
        <dbReference type="ChEBI" id="CHEBI:58121"/>
        <dbReference type="ChEBI" id="CHEBI:58273"/>
        <dbReference type="EC" id="5.3.1.6"/>
    </reaction>
</comment>
<comment type="pathway">
    <text evidence="1">Carbohydrate degradation; pentose phosphate pathway; D-ribose 5-phosphate from D-ribulose 5-phosphate (non-oxidative stage): step 1/1.</text>
</comment>
<comment type="subunit">
    <text evidence="1">Homodimer.</text>
</comment>
<comment type="similarity">
    <text evidence="1">Belongs to the ribose 5-phosphate isomerase family.</text>
</comment>
<organism>
    <name type="scientific">Shigella flexneri</name>
    <dbReference type="NCBI Taxonomy" id="623"/>
    <lineage>
        <taxon>Bacteria</taxon>
        <taxon>Pseudomonadati</taxon>
        <taxon>Pseudomonadota</taxon>
        <taxon>Gammaproteobacteria</taxon>
        <taxon>Enterobacterales</taxon>
        <taxon>Enterobacteriaceae</taxon>
        <taxon>Shigella</taxon>
    </lineage>
</organism>
<evidence type="ECO:0000255" key="1">
    <source>
        <dbReference type="HAMAP-Rule" id="MF_00170"/>
    </source>
</evidence>
<feature type="chain" id="PRO_0000158461" description="Ribose-5-phosphate isomerase A">
    <location>
        <begin position="1"/>
        <end position="219"/>
    </location>
</feature>
<feature type="active site" description="Proton acceptor" evidence="1">
    <location>
        <position position="103"/>
    </location>
</feature>
<feature type="binding site" evidence="1">
    <location>
        <begin position="28"/>
        <end position="31"/>
    </location>
    <ligand>
        <name>substrate</name>
    </ligand>
</feature>
<feature type="binding site" evidence="1">
    <location>
        <begin position="81"/>
        <end position="84"/>
    </location>
    <ligand>
        <name>substrate</name>
    </ligand>
</feature>
<feature type="binding site" evidence="1">
    <location>
        <begin position="94"/>
        <end position="97"/>
    </location>
    <ligand>
        <name>substrate</name>
    </ligand>
</feature>
<feature type="binding site" evidence="1">
    <location>
        <position position="121"/>
    </location>
    <ligand>
        <name>substrate</name>
    </ligand>
</feature>